<comment type="function">
    <text evidence="1 2 5 6">Central scaffolding component of the centrioles ensuring their 9-fold symmetry (By similarity). Required for centrosome biogenesis and duplication (PubMed:24240477, PubMed:38407237). Required both for mother-centriole-dependent centriole duplication and deuterosome-dependent centriole amplification in multiciliated cells (PubMed:24240477). Not required for centriole formation in embryonic stem cells but necessary to maintain centriole architecture (PubMed:38407237). Required for the recruitment of STIL to the procentriole and for STIL-mediated centriole amplification (By similarity).</text>
</comment>
<comment type="subunit">
    <text evidence="1 2">Nine homodimers form a cartwheel structure with an internal diameter of 23 nm and radial spokes connecting to the microtubule triplets (By similarity). Forms a complex with CPAP and STIL (By similarity). Interacts with FBXW5 (By similarity). Interacts with NUP62 and TUBG1 at the centrosome. Interacts with CENATAC; the interaction increases with CENATAC acetylation (By similarity). Interacts with FZR1; the interaction is regulated by CENATAC and leads to SASS6 proteasomal degradation (By similarity).</text>
</comment>
<comment type="subcellular location">
    <subcellularLocation>
        <location evidence="6">Cytoplasm</location>
        <location evidence="6">Cytoskeleton</location>
        <location evidence="6">Microtubule organizing center</location>
        <location evidence="6">Centrosome</location>
    </subcellularLocation>
    <subcellularLocation>
        <location evidence="5 6">Cytoplasm</location>
        <location evidence="5 6">Cytoskeleton</location>
        <location evidence="5 6">Microtubule organizing center</location>
        <location evidence="5 6">Centrosome</location>
        <location evidence="5 6">Centriole</location>
    </subcellularLocation>
    <text evidence="1 5">Component of the centrosome. Associated only transiently with nascent procentrioles during centriole biogenesis (By similarity). Component of the deuterosome, a structure that promotes de novo centriole amplification in multiciliated cells that can generate more than 100 centrioles (PubMed:24240477).</text>
</comment>
<comment type="alternative products">
    <event type="alternative splicing"/>
    <isoform>
        <id>Q80UK7-1</id>
        <name>1</name>
        <sequence type="displayed"/>
    </isoform>
    <isoform>
        <id>Q80UK7-2</id>
        <name>2</name>
        <sequence type="described" ref="VSP_013318 VSP_013319"/>
    </isoform>
</comment>
<comment type="domain">
    <text evidence="2">The 35 nM long coiled-coil domain mediates homodimerization while the globular N-terminus links the dimers at an angle of 40 degrees to form the inner ring.</text>
</comment>
<comment type="PTM">
    <text evidence="1">Ubiquitinated by the SCF(FBXW5) E3 ubiquitin-protein ligase complex during S phase, leading to its degradation and preventing centriole reduplication. Ubiquitinated by the anaphase promoting complex/cyclosome (APC/C) E3 ubiquitin-protein ligase complex, leading to its degradation and preventing centriole reduplication.</text>
</comment>
<comment type="disruption phenotype">
    <text evidence="6">Mutant embryos arrest at E9.5; likely due to impaired centriole formation that activates the TP53BP1/USP28/TP53 mitotic surveillance pathway, leading to cell death.</text>
</comment>
<organism>
    <name type="scientific">Mus musculus</name>
    <name type="common">Mouse</name>
    <dbReference type="NCBI Taxonomy" id="10090"/>
    <lineage>
        <taxon>Eukaryota</taxon>
        <taxon>Metazoa</taxon>
        <taxon>Chordata</taxon>
        <taxon>Craniata</taxon>
        <taxon>Vertebrata</taxon>
        <taxon>Euteleostomi</taxon>
        <taxon>Mammalia</taxon>
        <taxon>Eutheria</taxon>
        <taxon>Euarchontoglires</taxon>
        <taxon>Glires</taxon>
        <taxon>Rodentia</taxon>
        <taxon>Myomorpha</taxon>
        <taxon>Muroidea</taxon>
        <taxon>Muridae</taxon>
        <taxon>Murinae</taxon>
        <taxon>Mus</taxon>
        <taxon>Mus</taxon>
    </lineage>
</organism>
<dbReference type="EMBL" id="AK013338">
    <property type="protein sequence ID" value="BAB28799.1"/>
    <property type="molecule type" value="mRNA"/>
</dbReference>
<dbReference type="EMBL" id="AC131038">
    <property type="status" value="NOT_ANNOTATED_CDS"/>
    <property type="molecule type" value="Genomic_DNA"/>
</dbReference>
<dbReference type="EMBL" id="BC050110">
    <property type="protein sequence ID" value="AAH50110.1"/>
    <property type="molecule type" value="mRNA"/>
</dbReference>
<dbReference type="CCDS" id="CCDS17789.1">
    <molecule id="Q80UK7-1"/>
</dbReference>
<dbReference type="RefSeq" id="NP_001276497.1">
    <property type="nucleotide sequence ID" value="NM_001289568.1"/>
</dbReference>
<dbReference type="RefSeq" id="NP_001276500.1">
    <property type="nucleotide sequence ID" value="NM_001289571.1"/>
</dbReference>
<dbReference type="RefSeq" id="NP_082625.2">
    <molecule id="Q80UK7-1"/>
    <property type="nucleotide sequence ID" value="NM_028349.3"/>
</dbReference>
<dbReference type="SMR" id="Q80UK7"/>
<dbReference type="BioGRID" id="215561">
    <property type="interactions" value="20"/>
</dbReference>
<dbReference type="ComplexPortal" id="CPX-1297">
    <property type="entry name" value="CPAP-STIL complex"/>
</dbReference>
<dbReference type="FunCoup" id="Q80UK7">
    <property type="interactions" value="1823"/>
</dbReference>
<dbReference type="IntAct" id="Q80UK7">
    <property type="interactions" value="21"/>
</dbReference>
<dbReference type="STRING" id="10090.ENSMUSP00000143233"/>
<dbReference type="GlyGen" id="Q80UK7">
    <property type="glycosylation" value="4 sites, 1 O-linked glycan (4 sites)"/>
</dbReference>
<dbReference type="iPTMnet" id="Q80UK7"/>
<dbReference type="PhosphoSitePlus" id="Q80UK7"/>
<dbReference type="SwissPalm" id="Q80UK7"/>
<dbReference type="jPOST" id="Q80UK7"/>
<dbReference type="PaxDb" id="10090-ENSMUSP00000029571"/>
<dbReference type="PeptideAtlas" id="Q80UK7"/>
<dbReference type="ProteomicsDB" id="256920">
    <molecule id="Q80UK7-1"/>
</dbReference>
<dbReference type="ProteomicsDB" id="256921">
    <molecule id="Q80UK7-2"/>
</dbReference>
<dbReference type="Pumba" id="Q80UK7"/>
<dbReference type="Antibodypedia" id="33691">
    <property type="antibodies" value="132 antibodies from 19 providers"/>
</dbReference>
<dbReference type="DNASU" id="72776"/>
<dbReference type="Ensembl" id="ENSMUST00000198311.5">
    <molecule id="Q80UK7-1"/>
    <property type="protein sequence ID" value="ENSMUSP00000143233.2"/>
    <property type="gene ID" value="ENSMUSG00000027959.15"/>
</dbReference>
<dbReference type="Ensembl" id="ENSMUST00000198386.5">
    <molecule id="Q80UK7-2"/>
    <property type="protein sequence ID" value="ENSMUSP00000143175.2"/>
    <property type="gene ID" value="ENSMUSG00000027959.15"/>
</dbReference>
<dbReference type="GeneID" id="72776"/>
<dbReference type="KEGG" id="mmu:72776"/>
<dbReference type="UCSC" id="uc008rcm.2">
    <molecule id="Q80UK7-2"/>
    <property type="organism name" value="mouse"/>
</dbReference>
<dbReference type="UCSC" id="uc008rcn.3">
    <molecule id="Q80UK7-1"/>
    <property type="organism name" value="mouse"/>
</dbReference>
<dbReference type="AGR" id="MGI:1920026"/>
<dbReference type="CTD" id="163786"/>
<dbReference type="MGI" id="MGI:1920026">
    <property type="gene designation" value="Sass6"/>
</dbReference>
<dbReference type="VEuPathDB" id="HostDB:ENSMUSG00000027959"/>
<dbReference type="eggNOG" id="ENOG502QQ4W">
    <property type="taxonomic scope" value="Eukaryota"/>
</dbReference>
<dbReference type="GeneTree" id="ENSGT00390000006932"/>
<dbReference type="HOGENOM" id="CLU_2830555_0_0_1"/>
<dbReference type="InParanoid" id="Q80UK7"/>
<dbReference type="OMA" id="HMAMKIK"/>
<dbReference type="OrthoDB" id="49058at2759"/>
<dbReference type="PhylomeDB" id="Q80UK7"/>
<dbReference type="TreeFam" id="TF326199"/>
<dbReference type="BioGRID-ORCS" id="72776">
    <property type="hits" value="8 hits in 80 CRISPR screens"/>
</dbReference>
<dbReference type="ChiTaRS" id="Sass6">
    <property type="organism name" value="mouse"/>
</dbReference>
<dbReference type="PRO" id="PR:Q80UK7"/>
<dbReference type="Proteomes" id="UP000000589">
    <property type="component" value="Chromosome 3"/>
</dbReference>
<dbReference type="RNAct" id="Q80UK7">
    <property type="molecule type" value="protein"/>
</dbReference>
<dbReference type="Bgee" id="ENSMUSG00000027959">
    <property type="expression patterns" value="Expressed in spermatid and 199 other cell types or tissues"/>
</dbReference>
<dbReference type="ExpressionAtlas" id="Q80UK7">
    <property type="expression patterns" value="baseline and differential"/>
</dbReference>
<dbReference type="GO" id="GO:0005814">
    <property type="term" value="C:centriole"/>
    <property type="evidence" value="ECO:0000314"/>
    <property type="project" value="UniProtKB"/>
</dbReference>
<dbReference type="GO" id="GO:0005813">
    <property type="term" value="C:centrosome"/>
    <property type="evidence" value="ECO:0000250"/>
    <property type="project" value="UniProtKB"/>
</dbReference>
<dbReference type="GO" id="GO:0005737">
    <property type="term" value="C:cytoplasm"/>
    <property type="evidence" value="ECO:0000266"/>
    <property type="project" value="ComplexPortal"/>
</dbReference>
<dbReference type="GO" id="GO:0098536">
    <property type="term" value="C:deuterosome"/>
    <property type="evidence" value="ECO:0000314"/>
    <property type="project" value="UniProtKB"/>
</dbReference>
<dbReference type="GO" id="GO:0120099">
    <property type="term" value="C:procentriole replication complex"/>
    <property type="evidence" value="ECO:0000266"/>
    <property type="project" value="ComplexPortal"/>
</dbReference>
<dbReference type="GO" id="GO:0007099">
    <property type="term" value="P:centriole replication"/>
    <property type="evidence" value="ECO:0000250"/>
    <property type="project" value="UniProtKB"/>
</dbReference>
<dbReference type="GO" id="GO:0046601">
    <property type="term" value="P:positive regulation of centriole replication"/>
    <property type="evidence" value="ECO:0000266"/>
    <property type="project" value="ComplexPortal"/>
</dbReference>
<dbReference type="GO" id="GO:1900087">
    <property type="term" value="P:positive regulation of G1/S transition of mitotic cell cycle"/>
    <property type="evidence" value="ECO:0000266"/>
    <property type="project" value="ComplexPortal"/>
</dbReference>
<dbReference type="GO" id="GO:1905832">
    <property type="term" value="P:positive regulation of spindle assembly"/>
    <property type="evidence" value="ECO:0000303"/>
    <property type="project" value="ComplexPortal"/>
</dbReference>
<dbReference type="GO" id="GO:0060236">
    <property type="term" value="P:regulation of mitotic spindle organization"/>
    <property type="evidence" value="ECO:0000303"/>
    <property type="project" value="ComplexPortal"/>
</dbReference>
<dbReference type="CDD" id="cd10142">
    <property type="entry name" value="HD_SAS6_N"/>
    <property type="match status" value="1"/>
</dbReference>
<dbReference type="FunFam" id="2.170.210.20:FF:000001">
    <property type="entry name" value="Spindle assembly abnormal protein 6 homolog"/>
    <property type="match status" value="1"/>
</dbReference>
<dbReference type="Gene3D" id="2.170.210.20">
    <property type="entry name" value="Spindle assembly abnormal protein 6, N-terminal domain"/>
    <property type="match status" value="1"/>
</dbReference>
<dbReference type="InterPro" id="IPR032396">
    <property type="entry name" value="SAS-6_N"/>
</dbReference>
<dbReference type="InterPro" id="IPR038558">
    <property type="entry name" value="SAS-6_N_sf"/>
</dbReference>
<dbReference type="InterPro" id="IPR041513">
    <property type="entry name" value="SAS6_CC"/>
</dbReference>
<dbReference type="PANTHER" id="PTHR44281">
    <property type="entry name" value="SPINDLE ASSEMBLY ABNORMAL PROTEIN 6 HOMOLOG"/>
    <property type="match status" value="1"/>
</dbReference>
<dbReference type="PANTHER" id="PTHR44281:SF4">
    <property type="entry name" value="SPINDLE ASSEMBLY ABNORMAL PROTEIN 6 HOMOLOG"/>
    <property type="match status" value="1"/>
</dbReference>
<dbReference type="Pfam" id="PF16531">
    <property type="entry name" value="SAS-6_N"/>
    <property type="match status" value="1"/>
</dbReference>
<dbReference type="Pfam" id="PF18594">
    <property type="entry name" value="Sas6_CC"/>
    <property type="match status" value="1"/>
</dbReference>
<accession>Q80UK7</accession>
<accession>Q9CYT4</accession>
<evidence type="ECO:0000250" key="1">
    <source>
        <dbReference type="UniProtKB" id="Q6UVJ0"/>
    </source>
</evidence>
<evidence type="ECO:0000250" key="2">
    <source>
        <dbReference type="UniProtKB" id="Q7ZVT3"/>
    </source>
</evidence>
<evidence type="ECO:0000255" key="3"/>
<evidence type="ECO:0000256" key="4">
    <source>
        <dbReference type="SAM" id="MobiDB-lite"/>
    </source>
</evidence>
<evidence type="ECO:0000269" key="5">
    <source>
    </source>
</evidence>
<evidence type="ECO:0000269" key="6">
    <source>
    </source>
</evidence>
<evidence type="ECO:0000303" key="7">
    <source>
    </source>
</evidence>
<evidence type="ECO:0000303" key="8">
    <source>
    </source>
</evidence>
<evidence type="ECO:0000305" key="9"/>
<evidence type="ECO:0000312" key="10">
    <source>
        <dbReference type="MGI" id="MGI:1920026"/>
    </source>
</evidence>
<reference key="1">
    <citation type="journal article" date="2005" name="Science">
        <title>The transcriptional landscape of the mammalian genome.</title>
        <authorList>
            <person name="Carninci P."/>
            <person name="Kasukawa T."/>
            <person name="Katayama S."/>
            <person name="Gough J."/>
            <person name="Frith M.C."/>
            <person name="Maeda N."/>
            <person name="Oyama R."/>
            <person name="Ravasi T."/>
            <person name="Lenhard B."/>
            <person name="Wells C."/>
            <person name="Kodzius R."/>
            <person name="Shimokawa K."/>
            <person name="Bajic V.B."/>
            <person name="Brenner S.E."/>
            <person name="Batalov S."/>
            <person name="Forrest A.R."/>
            <person name="Zavolan M."/>
            <person name="Davis M.J."/>
            <person name="Wilming L.G."/>
            <person name="Aidinis V."/>
            <person name="Allen J.E."/>
            <person name="Ambesi-Impiombato A."/>
            <person name="Apweiler R."/>
            <person name="Aturaliya R.N."/>
            <person name="Bailey T.L."/>
            <person name="Bansal M."/>
            <person name="Baxter L."/>
            <person name="Beisel K.W."/>
            <person name="Bersano T."/>
            <person name="Bono H."/>
            <person name="Chalk A.M."/>
            <person name="Chiu K.P."/>
            <person name="Choudhary V."/>
            <person name="Christoffels A."/>
            <person name="Clutterbuck D.R."/>
            <person name="Crowe M.L."/>
            <person name="Dalla E."/>
            <person name="Dalrymple B.P."/>
            <person name="de Bono B."/>
            <person name="Della Gatta G."/>
            <person name="di Bernardo D."/>
            <person name="Down T."/>
            <person name="Engstrom P."/>
            <person name="Fagiolini M."/>
            <person name="Faulkner G."/>
            <person name="Fletcher C.F."/>
            <person name="Fukushima T."/>
            <person name="Furuno M."/>
            <person name="Futaki S."/>
            <person name="Gariboldi M."/>
            <person name="Georgii-Hemming P."/>
            <person name="Gingeras T.R."/>
            <person name="Gojobori T."/>
            <person name="Green R.E."/>
            <person name="Gustincich S."/>
            <person name="Harbers M."/>
            <person name="Hayashi Y."/>
            <person name="Hensch T.K."/>
            <person name="Hirokawa N."/>
            <person name="Hill D."/>
            <person name="Huminiecki L."/>
            <person name="Iacono M."/>
            <person name="Ikeo K."/>
            <person name="Iwama A."/>
            <person name="Ishikawa T."/>
            <person name="Jakt M."/>
            <person name="Kanapin A."/>
            <person name="Katoh M."/>
            <person name="Kawasawa Y."/>
            <person name="Kelso J."/>
            <person name="Kitamura H."/>
            <person name="Kitano H."/>
            <person name="Kollias G."/>
            <person name="Krishnan S.P."/>
            <person name="Kruger A."/>
            <person name="Kummerfeld S.K."/>
            <person name="Kurochkin I.V."/>
            <person name="Lareau L.F."/>
            <person name="Lazarevic D."/>
            <person name="Lipovich L."/>
            <person name="Liu J."/>
            <person name="Liuni S."/>
            <person name="McWilliam S."/>
            <person name="Madan Babu M."/>
            <person name="Madera M."/>
            <person name="Marchionni L."/>
            <person name="Matsuda H."/>
            <person name="Matsuzawa S."/>
            <person name="Miki H."/>
            <person name="Mignone F."/>
            <person name="Miyake S."/>
            <person name="Morris K."/>
            <person name="Mottagui-Tabar S."/>
            <person name="Mulder N."/>
            <person name="Nakano N."/>
            <person name="Nakauchi H."/>
            <person name="Ng P."/>
            <person name="Nilsson R."/>
            <person name="Nishiguchi S."/>
            <person name="Nishikawa S."/>
            <person name="Nori F."/>
            <person name="Ohara O."/>
            <person name="Okazaki Y."/>
            <person name="Orlando V."/>
            <person name="Pang K.C."/>
            <person name="Pavan W.J."/>
            <person name="Pavesi G."/>
            <person name="Pesole G."/>
            <person name="Petrovsky N."/>
            <person name="Piazza S."/>
            <person name="Reed J."/>
            <person name="Reid J.F."/>
            <person name="Ring B.Z."/>
            <person name="Ringwald M."/>
            <person name="Rost B."/>
            <person name="Ruan Y."/>
            <person name="Salzberg S.L."/>
            <person name="Sandelin A."/>
            <person name="Schneider C."/>
            <person name="Schoenbach C."/>
            <person name="Sekiguchi K."/>
            <person name="Semple C.A."/>
            <person name="Seno S."/>
            <person name="Sessa L."/>
            <person name="Sheng Y."/>
            <person name="Shibata Y."/>
            <person name="Shimada H."/>
            <person name="Shimada K."/>
            <person name="Silva D."/>
            <person name="Sinclair B."/>
            <person name="Sperling S."/>
            <person name="Stupka E."/>
            <person name="Sugiura K."/>
            <person name="Sultana R."/>
            <person name="Takenaka Y."/>
            <person name="Taki K."/>
            <person name="Tammoja K."/>
            <person name="Tan S.L."/>
            <person name="Tang S."/>
            <person name="Taylor M.S."/>
            <person name="Tegner J."/>
            <person name="Teichmann S.A."/>
            <person name="Ueda H.R."/>
            <person name="van Nimwegen E."/>
            <person name="Verardo R."/>
            <person name="Wei C.L."/>
            <person name="Yagi K."/>
            <person name="Yamanishi H."/>
            <person name="Zabarovsky E."/>
            <person name="Zhu S."/>
            <person name="Zimmer A."/>
            <person name="Hide W."/>
            <person name="Bult C."/>
            <person name="Grimmond S.M."/>
            <person name="Teasdale R.D."/>
            <person name="Liu E.T."/>
            <person name="Brusic V."/>
            <person name="Quackenbush J."/>
            <person name="Wahlestedt C."/>
            <person name="Mattick J.S."/>
            <person name="Hume D.A."/>
            <person name="Kai C."/>
            <person name="Sasaki D."/>
            <person name="Tomaru Y."/>
            <person name="Fukuda S."/>
            <person name="Kanamori-Katayama M."/>
            <person name="Suzuki M."/>
            <person name="Aoki J."/>
            <person name="Arakawa T."/>
            <person name="Iida J."/>
            <person name="Imamura K."/>
            <person name="Itoh M."/>
            <person name="Kato T."/>
            <person name="Kawaji H."/>
            <person name="Kawagashira N."/>
            <person name="Kawashima T."/>
            <person name="Kojima M."/>
            <person name="Kondo S."/>
            <person name="Konno H."/>
            <person name="Nakano K."/>
            <person name="Ninomiya N."/>
            <person name="Nishio T."/>
            <person name="Okada M."/>
            <person name="Plessy C."/>
            <person name="Shibata K."/>
            <person name="Shiraki T."/>
            <person name="Suzuki S."/>
            <person name="Tagami M."/>
            <person name="Waki K."/>
            <person name="Watahiki A."/>
            <person name="Okamura-Oho Y."/>
            <person name="Suzuki H."/>
            <person name="Kawai J."/>
            <person name="Hayashizaki Y."/>
        </authorList>
    </citation>
    <scope>NUCLEOTIDE SEQUENCE [LARGE SCALE MRNA] (ISOFORM 2)</scope>
    <source>
        <strain>C57BL/6J</strain>
    </source>
</reference>
<reference key="2">
    <citation type="journal article" date="2009" name="PLoS Biol.">
        <title>Lineage-specific biology revealed by a finished genome assembly of the mouse.</title>
        <authorList>
            <person name="Church D.M."/>
            <person name="Goodstadt L."/>
            <person name="Hillier L.W."/>
            <person name="Zody M.C."/>
            <person name="Goldstein S."/>
            <person name="She X."/>
            <person name="Bult C.J."/>
            <person name="Agarwala R."/>
            <person name="Cherry J.L."/>
            <person name="DiCuccio M."/>
            <person name="Hlavina W."/>
            <person name="Kapustin Y."/>
            <person name="Meric P."/>
            <person name="Maglott D."/>
            <person name="Birtle Z."/>
            <person name="Marques A.C."/>
            <person name="Graves T."/>
            <person name="Zhou S."/>
            <person name="Teague B."/>
            <person name="Potamousis K."/>
            <person name="Churas C."/>
            <person name="Place M."/>
            <person name="Herschleb J."/>
            <person name="Runnheim R."/>
            <person name="Forrest D."/>
            <person name="Amos-Landgraf J."/>
            <person name="Schwartz D.C."/>
            <person name="Cheng Z."/>
            <person name="Lindblad-Toh K."/>
            <person name="Eichler E.E."/>
            <person name="Ponting C.P."/>
        </authorList>
    </citation>
    <scope>NUCLEOTIDE SEQUENCE [LARGE SCALE GENOMIC DNA]</scope>
    <source>
        <strain>C57BL/6J</strain>
    </source>
</reference>
<reference key="3">
    <citation type="journal article" date="2004" name="Genome Res.">
        <title>The status, quality, and expansion of the NIH full-length cDNA project: the Mammalian Gene Collection (MGC).</title>
        <authorList>
            <consortium name="The MGC Project Team"/>
        </authorList>
    </citation>
    <scope>NUCLEOTIDE SEQUENCE [LARGE SCALE MRNA] (ISOFORM 1)</scope>
    <source>
        <strain>ICR</strain>
        <tissue>Trophoblast stem cell</tissue>
    </source>
</reference>
<reference key="4">
    <citation type="journal article" date="2013" name="Nat. Cell Biol.">
        <title>The Cep63 paralogue Deup1 enables massive de novo centriole biogenesis for vertebrate multiciliogenesis.</title>
        <authorList>
            <person name="Zhao H."/>
            <person name="Zhu L."/>
            <person name="Zhu Y."/>
            <person name="Cao J."/>
            <person name="Li S."/>
            <person name="Huang Q."/>
            <person name="Xu T."/>
            <person name="Huang X."/>
            <person name="Yan X."/>
            <person name="Zhu X."/>
        </authorList>
    </citation>
    <scope>FUNCTION</scope>
    <scope>SUBCELLULAR LOCATION</scope>
</reference>
<reference key="5">
    <citation type="journal article" date="2024" name="Elife">
        <title>Mouse SAS-6 is required for centriole formation in embryos and integrity in embryonic stem cells.</title>
        <authorList>
            <person name="Grzonka M."/>
            <person name="Bazzi H."/>
        </authorList>
    </citation>
    <scope>FUNCTION</scope>
    <scope>SUBCELLULAR LOCATION</scope>
    <scope>DISRUPTION PHENOTYPE</scope>
</reference>
<keyword id="KW-0025">Alternative splicing</keyword>
<keyword id="KW-0131">Cell cycle</keyword>
<keyword id="KW-0175">Coiled coil</keyword>
<keyword id="KW-0963">Cytoplasm</keyword>
<keyword id="KW-0206">Cytoskeleton</keyword>
<keyword id="KW-0597">Phosphoprotein</keyword>
<keyword id="KW-1185">Reference proteome</keyword>
<keyword id="KW-0832">Ubl conjugation</keyword>
<name>SAS6_MOUSE</name>
<gene>
    <name evidence="10" type="primary">Sass6</name>
    <name type="synonym">Sas6</name>
</gene>
<proteinExistence type="evidence at transcript level"/>
<protein>
    <recommendedName>
        <fullName evidence="9">Spindle assembly abnormal protein 6 homolog</fullName>
    </recommendedName>
    <alternativeName>
        <fullName evidence="8">Spindle assembly defective protein 6</fullName>
        <shortName evidence="8">SAS-6</shortName>
    </alternativeName>
</protein>
<feature type="chain" id="PRO_0000189973" description="Spindle assembly abnormal protein 6 homolog">
    <location>
        <begin position="1"/>
        <end position="654"/>
    </location>
</feature>
<feature type="domain" description="PISA">
    <location>
        <begin position="39"/>
        <end position="91"/>
    </location>
</feature>
<feature type="region of interest" description="Disordered" evidence="4">
    <location>
        <begin position="568"/>
        <end position="589"/>
    </location>
</feature>
<feature type="region of interest" description="Disordered" evidence="4">
    <location>
        <begin position="634"/>
        <end position="654"/>
    </location>
</feature>
<feature type="coiled-coil region" evidence="3">
    <location>
        <begin position="175"/>
        <end position="471"/>
    </location>
</feature>
<feature type="compositionally biased region" description="Low complexity" evidence="4">
    <location>
        <begin position="634"/>
        <end position="644"/>
    </location>
</feature>
<feature type="modified residue" description="Phosphoserine" evidence="1">
    <location>
        <position position="509"/>
    </location>
</feature>
<feature type="modified residue" description="Phosphoserine" evidence="1">
    <location>
        <position position="612"/>
    </location>
</feature>
<feature type="modified residue" description="Phosphoserine" evidence="1">
    <location>
        <position position="654"/>
    </location>
</feature>
<feature type="splice variant" id="VSP_013318" description="In isoform 2." evidence="7">
    <original>HFN</original>
    <variation>AKC</variation>
    <location>
        <begin position="558"/>
        <end position="560"/>
    </location>
</feature>
<feature type="splice variant" id="VSP_013319" description="In isoform 2." evidence="7">
    <location>
        <begin position="561"/>
        <end position="654"/>
    </location>
</feature>
<feature type="sequence conflict" description="In Ref. 1; BAB28799." evidence="9" ref="1">
    <original>C</original>
    <variation>R</variation>
    <location>
        <position position="19"/>
    </location>
</feature>
<feature type="sequence conflict" description="In Ref. 1; BAB28799." evidence="9" ref="1">
    <original>K</original>
    <variation>N</variation>
    <location>
        <position position="395"/>
    </location>
</feature>
<feature type="sequence conflict" description="In Ref. 3; AAH50110." evidence="9" ref="3">
    <original>N</original>
    <variation>D</variation>
    <location>
        <position position="579"/>
    </location>
</feature>
<sequence length="654" mass="74054">MSQVLFQQLVPLLVKCKDCEERRGSVRVSIELQSLSNPVHRKDLVIRLTDDTDPFFLYNLVISEEDFQSLKLQQGLLVDFLAFPQKFIDLLQQCMQEHAKETPRFLLQLLSSATLLENSPVLLNVVETNPFKHLIHLSLKLLPGNDVEIKKFLAGCLKCSKEEKLSLTRSLDDVTRQLHITQETLSEKMQELDKLRSEWASHTASLTNKHSQELTAEKEKALQTQVQCQQQHEQQKKELETLHQRNIHQLQSRLSELEAANKELTERKYKGDSTVRELKAKLAGVEEELQRAKQEVLSLRRENCTLDTECHEKEKHINQLQTKVAVLEQEIKDKDQLVLRTKEAFDTIQEQKVALEENGEKNQIQLGKLEATIKSLSAELLKANEIIKKLQGDLKTLMGKLKLKNTVTIQQEKLLAEKEEMLQKERKESQDAGQFLRAKEQEVCRLQEQLETTVQKLEESKQLLKNNEKLITWLNKELNENQLVRKQDTLGTSATPHSTSNSTIRSGLSPNLNVVDRLNYPSCGIGYPVSSALTFQNAFPHVVAAKNTSHPISGPKVHFNLQLTKPSASIDGQPGAAVNRPCSNDKENGETLGLESKYLKRREASIPLRGLSQNLLSDSDHQKDGMLGAFQLSSKPTVLPSSSSAYFPGQLPSS</sequence>